<reference key="1">
    <citation type="submission" date="2007-10" db="EMBL/GenBank/DDBJ databases">
        <title>Complete sequence of Methanococcus maripaludis C6.</title>
        <authorList>
            <consortium name="US DOE Joint Genome Institute"/>
            <person name="Copeland A."/>
            <person name="Lucas S."/>
            <person name="Lapidus A."/>
            <person name="Barry K."/>
            <person name="Glavina del Rio T."/>
            <person name="Dalin E."/>
            <person name="Tice H."/>
            <person name="Pitluck S."/>
            <person name="Clum A."/>
            <person name="Schmutz J."/>
            <person name="Larimer F."/>
            <person name="Land M."/>
            <person name="Hauser L."/>
            <person name="Kyrpides N."/>
            <person name="Mikhailova N."/>
            <person name="Sieprawska-Lupa M."/>
            <person name="Whitman W.B."/>
            <person name="Richardson P."/>
        </authorList>
    </citation>
    <scope>NUCLEOTIDE SEQUENCE [LARGE SCALE GENOMIC DNA]</scope>
    <source>
        <strain>C6 / ATCC BAA-1332</strain>
    </source>
</reference>
<dbReference type="EC" id="6.3.5.2" evidence="1"/>
<dbReference type="EMBL" id="CP000867">
    <property type="protein sequence ID" value="ABX02041.1"/>
    <property type="molecule type" value="Genomic_DNA"/>
</dbReference>
<dbReference type="SMR" id="A9A9L8"/>
<dbReference type="STRING" id="444158.MmarC6_1228"/>
<dbReference type="KEGG" id="mmx:MmarC6_1228"/>
<dbReference type="eggNOG" id="arCOG00087">
    <property type="taxonomic scope" value="Archaea"/>
</dbReference>
<dbReference type="HOGENOM" id="CLU_014340_1_4_2"/>
<dbReference type="OrthoDB" id="10772at2157"/>
<dbReference type="PhylomeDB" id="A9A9L8"/>
<dbReference type="UniPathway" id="UPA00189">
    <property type="reaction ID" value="UER00296"/>
</dbReference>
<dbReference type="GO" id="GO:0005829">
    <property type="term" value="C:cytosol"/>
    <property type="evidence" value="ECO:0007669"/>
    <property type="project" value="TreeGrafter"/>
</dbReference>
<dbReference type="GO" id="GO:0005524">
    <property type="term" value="F:ATP binding"/>
    <property type="evidence" value="ECO:0007669"/>
    <property type="project" value="UniProtKB-KW"/>
</dbReference>
<dbReference type="GO" id="GO:0003921">
    <property type="term" value="F:GMP synthase activity"/>
    <property type="evidence" value="ECO:0007669"/>
    <property type="project" value="TreeGrafter"/>
</dbReference>
<dbReference type="CDD" id="cd01742">
    <property type="entry name" value="GATase1_GMP_Synthase"/>
    <property type="match status" value="1"/>
</dbReference>
<dbReference type="FunFam" id="3.40.50.880:FF:000047">
    <property type="entry name" value="GMP synthase [glutamine-hydrolyzing] subunit A"/>
    <property type="match status" value="1"/>
</dbReference>
<dbReference type="Gene3D" id="3.40.50.880">
    <property type="match status" value="1"/>
</dbReference>
<dbReference type="HAMAP" id="MF_01510">
    <property type="entry name" value="GMP_synthase_A"/>
    <property type="match status" value="1"/>
</dbReference>
<dbReference type="InterPro" id="IPR029062">
    <property type="entry name" value="Class_I_gatase-like"/>
</dbReference>
<dbReference type="InterPro" id="IPR017926">
    <property type="entry name" value="GATASE"/>
</dbReference>
<dbReference type="InterPro" id="IPR004739">
    <property type="entry name" value="GMP_synth_GATase"/>
</dbReference>
<dbReference type="InterPro" id="IPR023686">
    <property type="entry name" value="GMP_synthase_A"/>
</dbReference>
<dbReference type="NCBIfam" id="TIGR00888">
    <property type="entry name" value="guaA_Nterm"/>
    <property type="match status" value="1"/>
</dbReference>
<dbReference type="NCBIfam" id="NF001975">
    <property type="entry name" value="PRK00758.1"/>
    <property type="match status" value="1"/>
</dbReference>
<dbReference type="PANTHER" id="PTHR11922:SF2">
    <property type="entry name" value="GMP SYNTHASE [GLUTAMINE-HYDROLYZING]"/>
    <property type="match status" value="1"/>
</dbReference>
<dbReference type="PANTHER" id="PTHR11922">
    <property type="entry name" value="GMP SYNTHASE-RELATED"/>
    <property type="match status" value="1"/>
</dbReference>
<dbReference type="Pfam" id="PF00117">
    <property type="entry name" value="GATase"/>
    <property type="match status" value="1"/>
</dbReference>
<dbReference type="PRINTS" id="PR00097">
    <property type="entry name" value="ANTSNTHASEII"/>
</dbReference>
<dbReference type="PRINTS" id="PR00096">
    <property type="entry name" value="GATASE"/>
</dbReference>
<dbReference type="SUPFAM" id="SSF52317">
    <property type="entry name" value="Class I glutamine amidotransferase-like"/>
    <property type="match status" value="1"/>
</dbReference>
<dbReference type="PROSITE" id="PS51273">
    <property type="entry name" value="GATASE_TYPE_1"/>
    <property type="match status" value="1"/>
</dbReference>
<sequence length="189" mass="20940">MIVILNNGGQYVHRIQRSLKYLEVPAKIVPNSTTLEEIIADSEIKGIILSGGPDITKATNCENIALNSEIPVLGICLGHQLISKAYGGHVSRADSEEYASITIYVKEENDLFKGVPSKFTAWASHMDEVKVTPGCFEILAYSDICGVESIKHKEKSIYGVQFHPEVSHTEYGDVILKNFCKKCGFEFEE</sequence>
<keyword id="KW-0067">ATP-binding</keyword>
<keyword id="KW-0315">Glutamine amidotransferase</keyword>
<keyword id="KW-0332">GMP biosynthesis</keyword>
<keyword id="KW-0436">Ligase</keyword>
<keyword id="KW-0547">Nucleotide-binding</keyword>
<keyword id="KW-0658">Purine biosynthesis</keyword>
<protein>
    <recommendedName>
        <fullName evidence="1">GMP synthase [glutamine-hydrolyzing] subunit A</fullName>
        <ecNumber evidence="1">6.3.5.2</ecNumber>
    </recommendedName>
    <alternativeName>
        <fullName evidence="1">Glutamine amidotransferase</fullName>
    </alternativeName>
</protein>
<gene>
    <name evidence="1" type="primary">guaAA</name>
    <name type="ordered locus">MmarC6_1228</name>
</gene>
<comment type="function">
    <text evidence="1">Catalyzes the synthesis of GMP from XMP.</text>
</comment>
<comment type="catalytic activity">
    <reaction evidence="1">
        <text>XMP + L-glutamine + ATP + H2O = GMP + L-glutamate + AMP + diphosphate + 2 H(+)</text>
        <dbReference type="Rhea" id="RHEA:11680"/>
        <dbReference type="ChEBI" id="CHEBI:15377"/>
        <dbReference type="ChEBI" id="CHEBI:15378"/>
        <dbReference type="ChEBI" id="CHEBI:29985"/>
        <dbReference type="ChEBI" id="CHEBI:30616"/>
        <dbReference type="ChEBI" id="CHEBI:33019"/>
        <dbReference type="ChEBI" id="CHEBI:57464"/>
        <dbReference type="ChEBI" id="CHEBI:58115"/>
        <dbReference type="ChEBI" id="CHEBI:58359"/>
        <dbReference type="ChEBI" id="CHEBI:456215"/>
        <dbReference type="EC" id="6.3.5.2"/>
    </reaction>
</comment>
<comment type="pathway">
    <text evidence="1">Purine metabolism; GMP biosynthesis; GMP from XMP (L-Gln route): step 1/1.</text>
</comment>
<comment type="subunit">
    <text evidence="1">Heterodimer composed of a glutamine amidotransferase subunit (A) and a GMP-binding subunit (B).</text>
</comment>
<proteinExistence type="inferred from homology"/>
<name>GUAAA_METM6</name>
<evidence type="ECO:0000255" key="1">
    <source>
        <dbReference type="HAMAP-Rule" id="MF_01510"/>
    </source>
</evidence>
<accession>A9A9L8</accession>
<organism>
    <name type="scientific">Methanococcus maripaludis (strain C6 / ATCC BAA-1332)</name>
    <dbReference type="NCBI Taxonomy" id="444158"/>
    <lineage>
        <taxon>Archaea</taxon>
        <taxon>Methanobacteriati</taxon>
        <taxon>Methanobacteriota</taxon>
        <taxon>Methanomada group</taxon>
        <taxon>Methanococci</taxon>
        <taxon>Methanococcales</taxon>
        <taxon>Methanococcaceae</taxon>
        <taxon>Methanococcus</taxon>
    </lineage>
</organism>
<feature type="chain" id="PRO_1000146133" description="GMP synthase [glutamine-hydrolyzing] subunit A">
    <location>
        <begin position="1"/>
        <end position="189"/>
    </location>
</feature>
<feature type="domain" description="Glutamine amidotransferase type-1" evidence="1">
    <location>
        <begin position="1"/>
        <end position="189"/>
    </location>
</feature>
<feature type="active site" description="Nucleophile" evidence="1">
    <location>
        <position position="76"/>
    </location>
</feature>
<feature type="active site" evidence="1">
    <location>
        <position position="163"/>
    </location>
</feature>
<feature type="active site" evidence="1">
    <location>
        <position position="165"/>
    </location>
</feature>